<keyword id="KW-0002">3D-structure</keyword>
<keyword id="KW-0472">Membrane</keyword>
<keyword id="KW-0597">Phosphoprotein</keyword>
<keyword id="KW-0653">Protein transport</keyword>
<keyword id="KW-1185">Reference proteome</keyword>
<keyword id="KW-0677">Repeat</keyword>
<keyword id="KW-0813">Transport</keyword>
<keyword id="KW-0853">WD repeat</keyword>
<evidence type="ECO:0000256" key="1">
    <source>
        <dbReference type="SAM" id="MobiDB-lite"/>
    </source>
</evidence>
<evidence type="ECO:0000269" key="2">
    <source>
    </source>
</evidence>
<evidence type="ECO:0000269" key="3">
    <source>
    </source>
</evidence>
<evidence type="ECO:0000269" key="4">
    <source>
    </source>
</evidence>
<evidence type="ECO:0000269" key="5">
    <source>
    </source>
</evidence>
<evidence type="ECO:0007744" key="6">
    <source>
    </source>
</evidence>
<evidence type="ECO:0007744" key="7">
    <source>
    </source>
</evidence>
<evidence type="ECO:0007744" key="8">
    <source>
    </source>
</evidence>
<comment type="function">
    <text evidence="2 3 5">Component of the RAVE complex, which is required for stable assembly of the vacuolar ATPase complex V-ATPase under many conditions. Required for transport between the early endosome and the late endosome/prevacuolar compartment (PVC), suggesting that assembly of vacuolar ATPase at the early endosome is required for transport from the early endosome to the PVC.</text>
</comment>
<comment type="subunit">
    <text evidence="2">Component of the RAVE complex composed of RAV1, RAV2 and CBF3D/SKP1. Within the complex, it interacts directly with RAV2 and CBF3D. Interacts with the V-ATPase V1 subunits VMA1, VMA2 and VMA8.</text>
</comment>
<comment type="interaction">
    <interactant intactId="EBI-25471">
        <id>P47104</id>
    </interactant>
    <interactant intactId="EBI-30629">
        <id>Q03956</id>
        <label>RAV2</label>
    </interactant>
    <organismsDiffer>false</organismsDiffer>
    <experiments>4</experiments>
</comment>
<comment type="interaction">
    <interactant intactId="EBI-25471">
        <id>P47104</id>
    </interactant>
    <interactant intactId="EBI-4090">
        <id>P52286</id>
        <label>SKP1</label>
    </interactant>
    <organismsDiffer>false</organismsDiffer>
    <experiments>5</experiments>
</comment>
<comment type="interaction">
    <interactant intactId="EBI-25471">
        <id>P47104</id>
    </interactant>
    <interactant intactId="EBI-20245">
        <id>P17255</id>
        <label>VMA1</label>
    </interactant>
    <organismsDiffer>false</organismsDiffer>
    <experiments>3</experiments>
</comment>
<comment type="interaction">
    <interactant intactId="EBI-25471">
        <id>P47104</id>
    </interactant>
    <interactant intactId="EBI-20254">
        <id>P16140</id>
        <label>VMA2</label>
    </interactant>
    <organismsDiffer>false</organismsDiffer>
    <experiments>4</experiments>
</comment>
<comment type="interaction">
    <interactant intactId="EBI-25471">
        <id>P47104</id>
    </interactant>
    <interactant intactId="EBI-20268">
        <id>P22203</id>
        <label>VMA4</label>
    </interactant>
    <organismsDiffer>false</organismsDiffer>
    <experiments>4</experiments>
</comment>
<comment type="interaction">
    <interactant intactId="EBI-25471">
        <id>P47104</id>
    </interactant>
    <interactant intactId="EBI-20264">
        <id>P32610</id>
        <label>VMA8</label>
    </interactant>
    <organismsDiffer>false</organismsDiffer>
    <experiments>2</experiments>
</comment>
<comment type="subcellular location">
    <subcellularLocation>
        <location evidence="5">Endomembrane system</location>
    </subcellularLocation>
    <text>Probably membrane-associated, associates with high density membrane compartment like early endosomes.</text>
</comment>
<comment type="miscellaneous">
    <text evidence="4">Present with 149 molecules/cell in log phase SD medium.</text>
</comment>
<reference key="1">
    <citation type="journal article" date="1996" name="EMBO J.">
        <title>Complete nucleotide sequence of Saccharomyces cerevisiae chromosome X.</title>
        <authorList>
            <person name="Galibert F."/>
            <person name="Alexandraki D."/>
            <person name="Baur A."/>
            <person name="Boles E."/>
            <person name="Chalwatzis N."/>
            <person name="Chuat J.-C."/>
            <person name="Coster F."/>
            <person name="Cziepluch C."/>
            <person name="de Haan M."/>
            <person name="Domdey H."/>
            <person name="Durand P."/>
            <person name="Entian K.-D."/>
            <person name="Gatius M."/>
            <person name="Goffeau A."/>
            <person name="Grivell L.A."/>
            <person name="Hennemann A."/>
            <person name="Herbert C.J."/>
            <person name="Heumann K."/>
            <person name="Hilger F."/>
            <person name="Hollenberg C.P."/>
            <person name="Huang M.-E."/>
            <person name="Jacq C."/>
            <person name="Jauniaux J.-C."/>
            <person name="Katsoulou C."/>
            <person name="Kirchrath L."/>
            <person name="Kleine K."/>
            <person name="Kordes E."/>
            <person name="Koetter P."/>
            <person name="Liebl S."/>
            <person name="Louis E.J."/>
            <person name="Manus V."/>
            <person name="Mewes H.-W."/>
            <person name="Miosga T."/>
            <person name="Obermaier B."/>
            <person name="Perea J."/>
            <person name="Pohl T.M."/>
            <person name="Portetelle D."/>
            <person name="Pujol A."/>
            <person name="Purnelle B."/>
            <person name="Ramezani Rad M."/>
            <person name="Rasmussen S.W."/>
            <person name="Rose M."/>
            <person name="Rossau R."/>
            <person name="Schaaff-Gerstenschlaeger I."/>
            <person name="Smits P.H.M."/>
            <person name="Scarcez T."/>
            <person name="Soriano N."/>
            <person name="To Van D."/>
            <person name="Tzermia M."/>
            <person name="Van Broekhoven A."/>
            <person name="Vandenbol M."/>
            <person name="Wedler H."/>
            <person name="von Wettstein D."/>
            <person name="Wambutt R."/>
            <person name="Zagulski M."/>
            <person name="Zollner A."/>
            <person name="Karpfinger-Hartl L."/>
        </authorList>
    </citation>
    <scope>NUCLEOTIDE SEQUENCE [LARGE SCALE GENOMIC DNA]</scope>
    <source>
        <strain>ATCC 204508 / S288c</strain>
    </source>
</reference>
<reference key="2">
    <citation type="journal article" date="2014" name="G3 (Bethesda)">
        <title>The reference genome sequence of Saccharomyces cerevisiae: Then and now.</title>
        <authorList>
            <person name="Engel S.R."/>
            <person name="Dietrich F.S."/>
            <person name="Fisk D.G."/>
            <person name="Binkley G."/>
            <person name="Balakrishnan R."/>
            <person name="Costanzo M.C."/>
            <person name="Dwight S.S."/>
            <person name="Hitz B.C."/>
            <person name="Karra K."/>
            <person name="Nash R.S."/>
            <person name="Weng S."/>
            <person name="Wong E.D."/>
            <person name="Lloyd P."/>
            <person name="Skrzypek M.S."/>
            <person name="Miyasato S.R."/>
            <person name="Simison M."/>
            <person name="Cherry J.M."/>
        </authorList>
    </citation>
    <scope>GENOME REANNOTATION</scope>
    <source>
        <strain>ATCC 204508 / S288c</strain>
    </source>
</reference>
<reference key="3">
    <citation type="journal article" date="1995" name="Yeast">
        <title>Analysis of a 42.5 kb DNA sequence of chromosome X reveals three tRNA genes and 14 new open reading frames including a gene most probably belonging to the family of ubiquitin-protein ligases.</title>
        <authorList>
            <person name="Huang M.-E."/>
            <person name="Chuat J.-C."/>
            <person name="Galibert F."/>
        </authorList>
    </citation>
    <scope>NUCLEOTIDE SEQUENCE [GENOMIC DNA] OF 1-1016</scope>
    <source>
        <strain>ATCC 204508 / S288c</strain>
    </source>
</reference>
<reference key="4">
    <citation type="journal article" date="1995" name="Yeast">
        <title>The sequence of 24.3 kb from chromosome X reveals five complete open reading frames, all of which correspond to new genes, and a tandem insertion of a Ty1 transposon.</title>
        <authorList>
            <person name="Zagulski M."/>
            <person name="Babinska B."/>
            <person name="Gromadka R."/>
            <person name="Migdalski A."/>
            <person name="Rytka J."/>
            <person name="Sulicka J."/>
            <person name="Herbert C.J."/>
        </authorList>
    </citation>
    <scope>NUCLEOTIDE SEQUENCE [GENOMIC DNA] OF 728-1357</scope>
</reference>
<reference key="5">
    <citation type="journal article" date="2001" name="Nat. Cell Biol.">
        <title>Skp1 forms multiple protein complexes, including RAVE, a regulator of V-ATPase assembly.</title>
        <authorList>
            <person name="Seol J.H."/>
            <person name="Shevchenko A."/>
            <person name="Shevchenko A."/>
            <person name="Deshaies R.J."/>
        </authorList>
    </citation>
    <scope>FUNCTION</scope>
    <scope>IDENTIFICATION IN THE RAVE COMPLEX WITH RAV2 AND CBF3D</scope>
    <scope>INTERACTION WITH RAV2; CBF3D; VMA1; VMA2; VMA4 AND VMA8</scope>
</reference>
<reference key="6">
    <citation type="journal article" date="2002" name="J. Biol. Chem.">
        <title>The RAVE complex is essential for stable assembly of the yeast V-ATPase.</title>
        <authorList>
            <person name="Smardon A.M."/>
            <person name="Tarsio M."/>
            <person name="Kane P.M."/>
        </authorList>
    </citation>
    <scope>FUNCTION OF THE RAVE COMPLEX</scope>
</reference>
<reference key="7">
    <citation type="journal article" date="2004" name="Mol. Biol. Cell">
        <title>Soi3p/Rav1p functions at the early endosome to regulate endocytic trafficking to the vacuole and localization of trans-Golgi network transmembrane proteins.</title>
        <authorList>
            <person name="Sipos G."/>
            <person name="Brickner J.H."/>
            <person name="Brace E.J."/>
            <person name="Chen L."/>
            <person name="Rambourg A."/>
            <person name="Kepes F."/>
            <person name="Fuller R.S."/>
        </authorList>
    </citation>
    <scope>FUNCTION</scope>
    <scope>SUBCELLULAR LOCATION</scope>
</reference>
<reference key="8">
    <citation type="journal article" date="2003" name="Nature">
        <title>Global analysis of protein expression in yeast.</title>
        <authorList>
            <person name="Ghaemmaghami S."/>
            <person name="Huh W.-K."/>
            <person name="Bower K."/>
            <person name="Howson R.W."/>
            <person name="Belle A."/>
            <person name="Dephoure N."/>
            <person name="O'Shea E.K."/>
            <person name="Weissman J.S."/>
        </authorList>
    </citation>
    <scope>LEVEL OF PROTEIN EXPRESSION [LARGE SCALE ANALYSIS]</scope>
</reference>
<reference key="9">
    <citation type="journal article" date="2005" name="Mol. Cell. Proteomics">
        <title>Quantitative phosphoproteomics applied to the yeast pheromone signaling pathway.</title>
        <authorList>
            <person name="Gruhler A."/>
            <person name="Olsen J.V."/>
            <person name="Mohammed S."/>
            <person name="Mortensen P."/>
            <person name="Faergeman N.J."/>
            <person name="Mann M."/>
            <person name="Jensen O.N."/>
        </authorList>
    </citation>
    <scope>PHOSPHORYLATION [LARGE SCALE ANALYSIS] AT SER-1244</scope>
    <scope>IDENTIFICATION BY MASS SPECTROMETRY [LARGE SCALE ANALYSIS]</scope>
    <source>
        <strain>YAL6B</strain>
    </source>
</reference>
<reference key="10">
    <citation type="journal article" date="2008" name="Mol. Cell. Proteomics">
        <title>A multidimensional chromatography technology for in-depth phosphoproteome analysis.</title>
        <authorList>
            <person name="Albuquerque C.P."/>
            <person name="Smolka M.B."/>
            <person name="Payne S.H."/>
            <person name="Bafna V."/>
            <person name="Eng J."/>
            <person name="Zhou H."/>
        </authorList>
    </citation>
    <scope>PHOSPHORYLATION [LARGE SCALE ANALYSIS] AT SER-1244 AND SER-1248</scope>
    <scope>IDENTIFICATION BY MASS SPECTROMETRY [LARGE SCALE ANALYSIS]</scope>
</reference>
<reference key="11">
    <citation type="journal article" date="2009" name="Science">
        <title>Global analysis of Cdk1 substrate phosphorylation sites provides insights into evolution.</title>
        <authorList>
            <person name="Holt L.J."/>
            <person name="Tuch B.B."/>
            <person name="Villen J."/>
            <person name="Johnson A.D."/>
            <person name="Gygi S.P."/>
            <person name="Morgan D.O."/>
        </authorList>
    </citation>
    <scope>PHOSPHORYLATION [LARGE SCALE ANALYSIS] AT SER-1244 AND SER-1248</scope>
    <scope>IDENTIFICATION BY MASS SPECTROMETRY [LARGE SCALE ANALYSIS]</scope>
</reference>
<sequence length="1357" mass="154933">MSLNFLPGRPNATPQTACQATWQNHTIFAYCSGNNLIILTNKFTRLQTIYTQSDCTAVDINSQNGFIALSFHNRVLIYKPIHQIMQNPKWTQCCQLFHDDTPVNCLRWSSDNELAIGSDFLSFWKIKDNFGVYQPILQWNQKQPKPVYNVIISQDSQLIVSIGKYDCNAKLWKRVSIVGEQAIFNLTMLPHPKPITAMRWKKEPDQVSKNNTASHALYTLCEDKVLRIWSCFEMEKNHTVQIWGEVPLSPTQKFCVIIDNWIIRQTLSVKDSEIFDISDSDIVILGSMTGEMEVLALNNLSQDPPKPMTKKTISHKKVKKATMLNDTRYLYLPEIQPYDNVKGKLSFLVHDLQGVIRHLLIDILQLINNKTEDLSAALEHKFTGHNKSVQKLVRSSDGEALLTTSRFSENGVWYPQKLNHGVSLRLQNTIQTESPIKFAVVHELGKQVICLLENGALQAWECPTNRKEDSEQKQSYLRVETRLKEEKKIHPIVMLNTPEPKHSHERHFTALIFSDGSIKAFEVSLTRGIFEVKSDSLDIDGDDIYKISIIDPVHQTFVSNRPLISLITKKGLTRTYKAIVNYNDRHVQWIKACEINTGIMNCTCIRGSSTGKLCIVNSTGKVMSLWDLNRGVLEYEETFHNPIEDIDWTSTEYGQSIVSIGFTGYALLYTQLRYDYTNNTPSYLPIEKIDITAHTAHNIGDSVWMKNGTFVVASGNQFYIKDKSLDLTDPFTYQSIGSRKILSNDILHLSSVLNGPLPVYHPQFLIQAIYANKLQLVKELLLRLFLALRKLDFESQDVSNLDSNLGMDPLKYFIAKDRDYPVESFPDPYPCFNKTVSLALTEQLTKTTLPYLTRHQQITLITVIEAVDEVTKNENIVDYNGVRFLLGVKLFLSHKNIQKSILMRDVSWALHSDNKEILLSSIDRHITSWNRAREYRIAYWIKEQDLVKKFEDIAKYEFSKDDKRDPSRCAIFYLALKKKQILLSLWKMAIGHPEQQKMVRFISNDFTVPRWRTAALKNAFVLLSKHRYMDAAVFFLLTDSLKDCVNVLCKQVHDMDLAIGVCRVYEGDNGPVLGELLTAQMLPETIKENDRWKASFIYWKLRKQEVAIKALLTAPIDLENNSSIVDKEVCVNRSFLVEDPALLYLYNHLRNRNLKYFIGSLNVEAKIECTLILRVTDILCRMGCNYLAVSLVKNWKFIERNSIPVQKLLKSPTKDRAYSAIGAMASEPISTARMRPSLFDKFGSPSASDIESPNPKLPNSLLDDFLQPPPNSTSSNSLAQSSSSAPRSILDEFVSPSYSQHKENLTPKAPNDSVGETDNSENRKDKLSKDILDDLSSQKPQKPKKSAITKNLLDDFV</sequence>
<accession>P47104</accession>
<accession>D6VWK6</accession>
<name>RAV1_YEAST</name>
<organism>
    <name type="scientific">Saccharomyces cerevisiae (strain ATCC 204508 / S288c)</name>
    <name type="common">Baker's yeast</name>
    <dbReference type="NCBI Taxonomy" id="559292"/>
    <lineage>
        <taxon>Eukaryota</taxon>
        <taxon>Fungi</taxon>
        <taxon>Dikarya</taxon>
        <taxon>Ascomycota</taxon>
        <taxon>Saccharomycotina</taxon>
        <taxon>Saccharomycetes</taxon>
        <taxon>Saccharomycetales</taxon>
        <taxon>Saccharomycetaceae</taxon>
        <taxon>Saccharomyces</taxon>
    </lineage>
</organism>
<protein>
    <recommendedName>
        <fullName>Regulator of V-ATPase in vacuolar membrane protein 1</fullName>
    </recommendedName>
    <alternativeName>
        <fullName>Suppression of the onset of impotence protein 3</fullName>
    </alternativeName>
</protein>
<feature type="chain" id="PRO_0000051183" description="Regulator of V-ATPase in vacuolar membrane protein 1">
    <location>
        <begin position="1"/>
        <end position="1357"/>
    </location>
</feature>
<feature type="repeat" description="WD 1">
    <location>
        <begin position="98"/>
        <end position="134"/>
    </location>
</feature>
<feature type="repeat" description="WD 2">
    <location>
        <begin position="142"/>
        <end position="182"/>
    </location>
</feature>
<feature type="repeat" description="WD 3">
    <location>
        <begin position="190"/>
        <end position="239"/>
    </location>
</feature>
<feature type="repeat" description="WD 4">
    <location>
        <begin position="384"/>
        <end position="423"/>
    </location>
</feature>
<feature type="repeat" description="WD 5">
    <location>
        <begin position="431"/>
        <end position="470"/>
    </location>
</feature>
<feature type="repeat" description="WD 6">
    <location>
        <begin position="595"/>
        <end position="636"/>
    </location>
</feature>
<feature type="repeat" description="WD 7">
    <location>
        <begin position="638"/>
        <end position="679"/>
    </location>
</feature>
<feature type="repeat" description="WD 8">
    <location>
        <begin position="898"/>
        <end position="939"/>
    </location>
</feature>
<feature type="region of interest" description="Disordered" evidence="1">
    <location>
        <begin position="1243"/>
        <end position="1357"/>
    </location>
</feature>
<feature type="compositionally biased region" description="Low complexity" evidence="1">
    <location>
        <begin position="1272"/>
        <end position="1288"/>
    </location>
</feature>
<feature type="compositionally biased region" description="Basic and acidic residues" evidence="1">
    <location>
        <begin position="1320"/>
        <end position="1332"/>
    </location>
</feature>
<feature type="modified residue" description="Phosphoserine" evidence="6 7 8">
    <location>
        <position position="1244"/>
    </location>
</feature>
<feature type="modified residue" description="Phosphoserine" evidence="7 8">
    <location>
        <position position="1248"/>
    </location>
</feature>
<dbReference type="EMBL" id="Z49533">
    <property type="protein sequence ID" value="CAA89560.1"/>
    <property type="molecule type" value="Genomic_DNA"/>
</dbReference>
<dbReference type="EMBL" id="L36344">
    <property type="protein sequence ID" value="AAA88735.1"/>
    <property type="molecule type" value="Genomic_DNA"/>
</dbReference>
<dbReference type="EMBL" id="X87297">
    <property type="protein sequence ID" value="CAA60726.1"/>
    <property type="molecule type" value="Genomic_DNA"/>
</dbReference>
<dbReference type="EMBL" id="BK006943">
    <property type="protein sequence ID" value="DAA08822.1"/>
    <property type="molecule type" value="Genomic_DNA"/>
</dbReference>
<dbReference type="PIR" id="S57052">
    <property type="entry name" value="S57052"/>
</dbReference>
<dbReference type="RefSeq" id="NP_012567.3">
    <property type="nucleotide sequence ID" value="NM_001181691.3"/>
</dbReference>
<dbReference type="PDB" id="9COP">
    <property type="method" value="EM"/>
    <property type="resolution" value="2.70 A"/>
    <property type="chains" value="x=1-1357"/>
</dbReference>
<dbReference type="PDBsum" id="9COP"/>
<dbReference type="EMDB" id="EMD-45788"/>
<dbReference type="SMR" id="P47104"/>
<dbReference type="BioGRID" id="33786">
    <property type="interactions" value="282"/>
</dbReference>
<dbReference type="ComplexPortal" id="CPX-1627">
    <property type="entry name" value="RAVE complex"/>
</dbReference>
<dbReference type="DIP" id="DIP-916N"/>
<dbReference type="FunCoup" id="P47104">
    <property type="interactions" value="110"/>
</dbReference>
<dbReference type="IntAct" id="P47104">
    <property type="interactions" value="11"/>
</dbReference>
<dbReference type="MINT" id="P47104"/>
<dbReference type="STRING" id="4932.YJR033C"/>
<dbReference type="CarbonylDB" id="P47104"/>
<dbReference type="iPTMnet" id="P47104"/>
<dbReference type="PaxDb" id="4932-YJR033C"/>
<dbReference type="PeptideAtlas" id="P47104"/>
<dbReference type="TopDownProteomics" id="P47104"/>
<dbReference type="EnsemblFungi" id="YJR033C_mRNA">
    <property type="protein sequence ID" value="YJR033C"/>
    <property type="gene ID" value="YJR033C"/>
</dbReference>
<dbReference type="GeneID" id="853490"/>
<dbReference type="KEGG" id="sce:YJR033C"/>
<dbReference type="AGR" id="SGD:S000003794"/>
<dbReference type="SGD" id="S000003794">
    <property type="gene designation" value="RAV1"/>
</dbReference>
<dbReference type="VEuPathDB" id="FungiDB:YJR033C"/>
<dbReference type="eggNOG" id="KOG1064">
    <property type="taxonomic scope" value="Eukaryota"/>
</dbReference>
<dbReference type="GeneTree" id="ENSGT00390000000096"/>
<dbReference type="HOGENOM" id="CLU_000310_0_1_1"/>
<dbReference type="InParanoid" id="P47104"/>
<dbReference type="OMA" id="NSHLTLW"/>
<dbReference type="OrthoDB" id="342131at2759"/>
<dbReference type="BioCyc" id="YEAST:G3O-31670-MONOMER"/>
<dbReference type="BioGRID-ORCS" id="853490">
    <property type="hits" value="6 hits in 10 CRISPR screens"/>
</dbReference>
<dbReference type="PRO" id="PR:P47104"/>
<dbReference type="Proteomes" id="UP000002311">
    <property type="component" value="Chromosome X"/>
</dbReference>
<dbReference type="RNAct" id="P47104">
    <property type="molecule type" value="protein"/>
</dbReference>
<dbReference type="GO" id="GO:0005737">
    <property type="term" value="C:cytoplasm"/>
    <property type="evidence" value="ECO:0000314"/>
    <property type="project" value="SGD"/>
</dbReference>
<dbReference type="GO" id="GO:0012505">
    <property type="term" value="C:endomembrane system"/>
    <property type="evidence" value="ECO:0000303"/>
    <property type="project" value="ComplexPortal"/>
</dbReference>
<dbReference type="GO" id="GO:0016020">
    <property type="term" value="C:membrane"/>
    <property type="evidence" value="ECO:0007669"/>
    <property type="project" value="UniProtKB-KW"/>
</dbReference>
<dbReference type="GO" id="GO:0043291">
    <property type="term" value="C:RAVE complex"/>
    <property type="evidence" value="ECO:0000353"/>
    <property type="project" value="ComplexPortal"/>
</dbReference>
<dbReference type="GO" id="GO:0045022">
    <property type="term" value="P:early endosome to late endosome transport"/>
    <property type="evidence" value="ECO:0000315"/>
    <property type="project" value="SGD"/>
</dbReference>
<dbReference type="GO" id="GO:0015031">
    <property type="term" value="P:protein transport"/>
    <property type="evidence" value="ECO:0007669"/>
    <property type="project" value="UniProtKB-KW"/>
</dbReference>
<dbReference type="GO" id="GO:0043254">
    <property type="term" value="P:regulation of protein-containing complex assembly"/>
    <property type="evidence" value="ECO:0000315"/>
    <property type="project" value="SGD"/>
</dbReference>
<dbReference type="GO" id="GO:0007035">
    <property type="term" value="P:vacuolar acidification"/>
    <property type="evidence" value="ECO:0000315"/>
    <property type="project" value="SGD"/>
</dbReference>
<dbReference type="GO" id="GO:0070072">
    <property type="term" value="P:vacuolar proton-transporting V-type ATPase complex assembly"/>
    <property type="evidence" value="ECO:0000314"/>
    <property type="project" value="ComplexPortal"/>
</dbReference>
<dbReference type="FunFam" id="2.130.10.10:FF:001094">
    <property type="entry name" value="Regulator of (H+)-ATPase in vacuolar membrane"/>
    <property type="match status" value="1"/>
</dbReference>
<dbReference type="Gene3D" id="2.130.10.10">
    <property type="entry name" value="YVTN repeat-like/Quinoprotein amine dehydrogenase"/>
    <property type="match status" value="2"/>
</dbReference>
<dbReference type="InterPro" id="IPR052208">
    <property type="entry name" value="DmX-like/RAVE_component"/>
</dbReference>
<dbReference type="InterPro" id="IPR022033">
    <property type="entry name" value="Rav1p_C"/>
</dbReference>
<dbReference type="InterPro" id="IPR015943">
    <property type="entry name" value="WD40/YVTN_repeat-like_dom_sf"/>
</dbReference>
<dbReference type="InterPro" id="IPR036322">
    <property type="entry name" value="WD40_repeat_dom_sf"/>
</dbReference>
<dbReference type="InterPro" id="IPR001680">
    <property type="entry name" value="WD40_rpt"/>
</dbReference>
<dbReference type="PANTHER" id="PTHR13950:SF9">
    <property type="entry name" value="RABCONNECTIN-3A"/>
    <property type="match status" value="1"/>
</dbReference>
<dbReference type="PANTHER" id="PTHR13950">
    <property type="entry name" value="RABCONNECTIN-RELATED"/>
    <property type="match status" value="1"/>
</dbReference>
<dbReference type="Pfam" id="PF12234">
    <property type="entry name" value="Rav1p_C"/>
    <property type="match status" value="1"/>
</dbReference>
<dbReference type="SMART" id="SM00320">
    <property type="entry name" value="WD40"/>
    <property type="match status" value="5"/>
</dbReference>
<dbReference type="SUPFAM" id="SSF50978">
    <property type="entry name" value="WD40 repeat-like"/>
    <property type="match status" value="2"/>
</dbReference>
<proteinExistence type="evidence at protein level"/>
<gene>
    <name type="primary">RAV1</name>
    <name type="synonym">SOI3</name>
    <name type="ordered locus">YJR033C</name>
    <name type="ORF">J1590</name>
</gene>